<reference key="1">
    <citation type="journal article" date="2004" name="Science">
        <title>The Ashbya gossypii genome as a tool for mapping the ancient Saccharomyces cerevisiae genome.</title>
        <authorList>
            <person name="Dietrich F.S."/>
            <person name="Voegeli S."/>
            <person name="Brachat S."/>
            <person name="Lerch A."/>
            <person name="Gates K."/>
            <person name="Steiner S."/>
            <person name="Mohr C."/>
            <person name="Poehlmann R."/>
            <person name="Luedi P."/>
            <person name="Choi S."/>
            <person name="Wing R.A."/>
            <person name="Flavier A."/>
            <person name="Gaffney T.D."/>
            <person name="Philippsen P."/>
        </authorList>
    </citation>
    <scope>NUCLEOTIDE SEQUENCE [LARGE SCALE GENOMIC DNA]</scope>
    <source>
        <strain>ATCC 10895 / CBS 109.51 / FGSC 9923 / NRRL Y-1056</strain>
    </source>
</reference>
<reference key="2">
    <citation type="journal article" date="2013" name="G3 (Bethesda)">
        <title>Genomes of Ashbya fungi isolated from insects reveal four mating-type loci, numerous translocations, lack of transposons, and distinct gene duplications.</title>
        <authorList>
            <person name="Dietrich F.S."/>
            <person name="Voegeli S."/>
            <person name="Kuo S."/>
            <person name="Philippsen P."/>
        </authorList>
    </citation>
    <scope>GENOME REANNOTATION</scope>
    <scope>SEQUENCE REVISION TO 312</scope>
    <source>
        <strain>ATCC 10895 / CBS 109.51 / FGSC 9923 / NRRL Y-1056</strain>
    </source>
</reference>
<comment type="function">
    <text evidence="3">Catalytic component of the histone acetylase B (HAT-B) complex. Acetylates 'Lys-12' of histone H4 which is required for telomeric silencing. Has intrinsic substrate specificity that modifies lysine in recognition sequence GXGKXG. Involved in DNA double-strand break repair.</text>
</comment>
<comment type="catalytic activity">
    <reaction evidence="3">
        <text>L-lysyl-[protein] + acetyl-CoA = N(6)-acetyl-L-lysyl-[protein] + CoA + H(+)</text>
        <dbReference type="Rhea" id="RHEA:45948"/>
        <dbReference type="Rhea" id="RHEA-COMP:9752"/>
        <dbReference type="Rhea" id="RHEA-COMP:10731"/>
        <dbReference type="ChEBI" id="CHEBI:15378"/>
        <dbReference type="ChEBI" id="CHEBI:29969"/>
        <dbReference type="ChEBI" id="CHEBI:57287"/>
        <dbReference type="ChEBI" id="CHEBI:57288"/>
        <dbReference type="ChEBI" id="CHEBI:61930"/>
        <dbReference type="EC" id="2.3.1.48"/>
    </reaction>
</comment>
<comment type="subunit">
    <text evidence="3">Component of the HAT-B complex composed of at least HAT1 and HAT2. The HAT-B complex binds to histone H4 tail (By similarity).</text>
</comment>
<comment type="subcellular location">
    <subcellularLocation>
        <location evidence="1">Cytoplasm</location>
    </subcellularLocation>
    <subcellularLocation>
        <location evidence="1">Nucleus</location>
    </subcellularLocation>
</comment>
<comment type="similarity">
    <text evidence="5">Belongs to the HAT1 family.</text>
</comment>
<gene>
    <name type="primary">HAT1</name>
    <name type="ordered locus">AGL001W</name>
</gene>
<evidence type="ECO:0000250" key="1"/>
<evidence type="ECO:0000250" key="2">
    <source>
        <dbReference type="UniProtKB" id="O14929"/>
    </source>
</evidence>
<evidence type="ECO:0000250" key="3">
    <source>
        <dbReference type="UniProtKB" id="Q12341"/>
    </source>
</evidence>
<evidence type="ECO:0000256" key="4">
    <source>
        <dbReference type="SAM" id="MobiDB-lite"/>
    </source>
</evidence>
<evidence type="ECO:0000305" key="5"/>
<proteinExistence type="inferred from homology"/>
<feature type="chain" id="PRO_0000227716" description="Histone acetyltransferase type B catalytic subunit">
    <location>
        <begin position="1"/>
        <end position="391"/>
    </location>
</feature>
<feature type="region of interest" description="Interaction with histone H4 N-terminus" evidence="3">
    <location>
        <begin position="193"/>
        <end position="195"/>
    </location>
</feature>
<feature type="region of interest" description="Disordered" evidence="4">
    <location>
        <begin position="372"/>
        <end position="391"/>
    </location>
</feature>
<feature type="active site" description="Proton donor/acceptor" evidence="3">
    <location>
        <position position="254"/>
    </location>
</feature>
<feature type="binding site" evidence="3">
    <location>
        <begin position="219"/>
        <end position="221"/>
    </location>
    <ligand>
        <name>acetyl-CoA</name>
        <dbReference type="ChEBI" id="CHEBI:57288"/>
    </ligand>
</feature>
<feature type="binding site" evidence="3">
    <location>
        <begin position="226"/>
        <end position="232"/>
    </location>
    <ligand>
        <name>acetyl-CoA</name>
        <dbReference type="ChEBI" id="CHEBI:57288"/>
    </ligand>
</feature>
<feature type="site" description="Interaction with histone H4 N-terminus" evidence="2">
    <location>
        <position position="173"/>
    </location>
</feature>
<dbReference type="EC" id="2.3.1.48" evidence="3"/>
<dbReference type="EMBL" id="AE016820">
    <property type="protein sequence ID" value="AAS54489.2"/>
    <property type="molecule type" value="Genomic_DNA"/>
</dbReference>
<dbReference type="RefSeq" id="NP_986665.2">
    <property type="nucleotide sequence ID" value="NM_211727.2"/>
</dbReference>
<dbReference type="SMR" id="Q750F5"/>
<dbReference type="FunCoup" id="Q750F5">
    <property type="interactions" value="1222"/>
</dbReference>
<dbReference type="STRING" id="284811.Q750F5"/>
<dbReference type="EnsemblFungi" id="AAS54489">
    <property type="protein sequence ID" value="AAS54489"/>
    <property type="gene ID" value="AGOS_AGL001W"/>
</dbReference>
<dbReference type="GeneID" id="4622964"/>
<dbReference type="KEGG" id="ago:AGOS_AGL001W"/>
<dbReference type="eggNOG" id="KOG2696">
    <property type="taxonomic scope" value="Eukaryota"/>
</dbReference>
<dbReference type="HOGENOM" id="CLU_036024_2_1_1"/>
<dbReference type="InParanoid" id="Q750F5"/>
<dbReference type="OMA" id="WTCDAND"/>
<dbReference type="OrthoDB" id="10253098at2759"/>
<dbReference type="Proteomes" id="UP000000591">
    <property type="component" value="Chromosome VII"/>
</dbReference>
<dbReference type="GO" id="GO:0000781">
    <property type="term" value="C:chromosome, telomeric region"/>
    <property type="evidence" value="ECO:0007669"/>
    <property type="project" value="GOC"/>
</dbReference>
<dbReference type="GO" id="GO:0005737">
    <property type="term" value="C:cytoplasm"/>
    <property type="evidence" value="ECO:0007669"/>
    <property type="project" value="UniProtKB-SubCell"/>
</dbReference>
<dbReference type="GO" id="GO:0000123">
    <property type="term" value="C:histone acetyltransferase complex"/>
    <property type="evidence" value="ECO:0007669"/>
    <property type="project" value="EnsemblFungi"/>
</dbReference>
<dbReference type="GO" id="GO:0005634">
    <property type="term" value="C:nucleus"/>
    <property type="evidence" value="ECO:0007669"/>
    <property type="project" value="UniProtKB-SubCell"/>
</dbReference>
<dbReference type="GO" id="GO:0003682">
    <property type="term" value="F:chromatin binding"/>
    <property type="evidence" value="ECO:0007669"/>
    <property type="project" value="EnsemblFungi"/>
</dbReference>
<dbReference type="GO" id="GO:0042393">
    <property type="term" value="F:histone binding"/>
    <property type="evidence" value="ECO:0007669"/>
    <property type="project" value="InterPro"/>
</dbReference>
<dbReference type="GO" id="GO:0010485">
    <property type="term" value="F:histone H4 acetyltransferase activity"/>
    <property type="evidence" value="ECO:0000318"/>
    <property type="project" value="GO_Central"/>
</dbReference>
<dbReference type="GO" id="GO:0006302">
    <property type="term" value="P:double-strand break repair"/>
    <property type="evidence" value="ECO:0007669"/>
    <property type="project" value="EnsemblFungi"/>
</dbReference>
<dbReference type="GO" id="GO:0031509">
    <property type="term" value="P:subtelomeric heterochromatin formation"/>
    <property type="evidence" value="ECO:0007669"/>
    <property type="project" value="EnsemblFungi"/>
</dbReference>
<dbReference type="FunFam" id="3.40.630.30:FF:000114">
    <property type="entry name" value="Histone acetyltransferase type B catalytic subunit"/>
    <property type="match status" value="1"/>
</dbReference>
<dbReference type="Gene3D" id="1.10.10.390">
    <property type="match status" value="1"/>
</dbReference>
<dbReference type="Gene3D" id="3.40.630.30">
    <property type="match status" value="1"/>
</dbReference>
<dbReference type="Gene3D" id="3.90.360.10">
    <property type="entry name" value="Histone acetyl transferase 1 (HAT1), N-terminal domain"/>
    <property type="match status" value="1"/>
</dbReference>
<dbReference type="InterPro" id="IPR016181">
    <property type="entry name" value="Acyl_CoA_acyltransferase"/>
</dbReference>
<dbReference type="InterPro" id="IPR019467">
    <property type="entry name" value="Hat1_N"/>
</dbReference>
<dbReference type="InterPro" id="IPR037113">
    <property type="entry name" value="Hat1_N_sf"/>
</dbReference>
<dbReference type="InterPro" id="IPR017380">
    <property type="entry name" value="Hist_AcTrfase_B-typ_cat-su"/>
</dbReference>
<dbReference type="InterPro" id="IPR013523">
    <property type="entry name" value="Hist_AcTrfase_HAT1_C"/>
</dbReference>
<dbReference type="PANTHER" id="PTHR12046">
    <property type="entry name" value="HISTONE ACETYLTRANSFERASE TYPE B CATALYTIC SUBUNIT"/>
    <property type="match status" value="1"/>
</dbReference>
<dbReference type="Pfam" id="PF21184">
    <property type="entry name" value="HAT1_C_fung"/>
    <property type="match status" value="1"/>
</dbReference>
<dbReference type="Pfam" id="PF10394">
    <property type="entry name" value="Hat1_N"/>
    <property type="match status" value="1"/>
</dbReference>
<dbReference type="PIRSF" id="PIRSF038084">
    <property type="entry name" value="HAT-B_cat"/>
    <property type="match status" value="1"/>
</dbReference>
<dbReference type="SUPFAM" id="SSF55729">
    <property type="entry name" value="Acyl-CoA N-acyltransferases (Nat)"/>
    <property type="match status" value="1"/>
</dbReference>
<sequence>MAEELKPELWTTSSNSALKLSLVNDENAVQFSPIFTYPIFGQAEQLFGYQDLNILLAFDSVTFKPFLNIKYTKKLERGLDDVEGSILKFLPEGDVILKDEVEWVDAFNGEREKFALPNSESKVAEYTSGGESFAIFKVHLSDPNIRQLHRRMQIFTLLFIEAASYIDEDDSAWDIFMTFNTSTRQCIGYTTTYKHWRYINGQEFDSSEKTTKRAKISQFIIFPPYQSKSHGSHLYSAAIDVWSKEEKISEVTVEDPNEAFDDLRDRCDFMRLSGSGLSSSIPEDVPIPRTWLTEQARKYKLSLVQFTRLVEMILLYDNSPNFEIQVKARLYQKNHEVLTGMDSDTRKAKLQEAFTSLKEDYARILQKVPNRRRVLPSDEENAGESKRHKKE</sequence>
<name>HAT1_EREGS</name>
<accession>Q750F5</accession>
<keyword id="KW-0012">Acyltransferase</keyword>
<keyword id="KW-0156">Chromatin regulator</keyword>
<keyword id="KW-0963">Cytoplasm</keyword>
<keyword id="KW-0227">DNA damage</keyword>
<keyword id="KW-0234">DNA repair</keyword>
<keyword id="KW-0539">Nucleus</keyword>
<keyword id="KW-1185">Reference proteome</keyword>
<keyword id="KW-0808">Transferase</keyword>
<organism>
    <name type="scientific">Eremothecium gossypii (strain ATCC 10895 / CBS 109.51 / FGSC 9923 / NRRL Y-1056)</name>
    <name type="common">Yeast</name>
    <name type="synonym">Ashbya gossypii</name>
    <dbReference type="NCBI Taxonomy" id="284811"/>
    <lineage>
        <taxon>Eukaryota</taxon>
        <taxon>Fungi</taxon>
        <taxon>Dikarya</taxon>
        <taxon>Ascomycota</taxon>
        <taxon>Saccharomycotina</taxon>
        <taxon>Saccharomycetes</taxon>
        <taxon>Saccharomycetales</taxon>
        <taxon>Saccharomycetaceae</taxon>
        <taxon>Eremothecium</taxon>
    </lineage>
</organism>
<protein>
    <recommendedName>
        <fullName>Histone acetyltransferase type B catalytic subunit</fullName>
        <ecNumber evidence="3">2.3.1.48</ecNumber>
    </recommendedName>
</protein>